<evidence type="ECO:0000255" key="1">
    <source>
        <dbReference type="HAMAP-Rule" id="MF_01369"/>
    </source>
</evidence>
<evidence type="ECO:0000305" key="2"/>
<accession>Q32B33</accession>
<sequence>MIREECLLKVLRAPHVSEKASTAMEKSNTIVLKVAKDATKAEIKAAVQKLFEVEVEVVNTLVVKGKVKRHGQRIGRRSDWKKAYVTLKEGQNLDFVGGAE</sequence>
<feature type="chain" id="PRO_0000272845" description="Large ribosomal subunit protein uL23">
    <location>
        <begin position="1"/>
        <end position="100"/>
    </location>
</feature>
<comment type="function">
    <text evidence="1">One of the early assembly proteins it binds 23S rRNA. One of the proteins that surrounds the polypeptide exit tunnel on the outside of the ribosome. Forms the main docking site for trigger factor binding to the ribosome.</text>
</comment>
<comment type="subunit">
    <text evidence="1">Part of the 50S ribosomal subunit. Contacts protein L29, and trigger factor when it is bound to the ribosome.</text>
</comment>
<comment type="similarity">
    <text evidence="1">Belongs to the universal ribosomal protein uL23 family.</text>
</comment>
<gene>
    <name evidence="1" type="primary">rplW</name>
    <name type="ordered locus">SDY_3494</name>
</gene>
<reference key="1">
    <citation type="journal article" date="2005" name="Nucleic Acids Res.">
        <title>Genome dynamics and diversity of Shigella species, the etiologic agents of bacillary dysentery.</title>
        <authorList>
            <person name="Yang F."/>
            <person name="Yang J."/>
            <person name="Zhang X."/>
            <person name="Chen L."/>
            <person name="Jiang Y."/>
            <person name="Yan Y."/>
            <person name="Tang X."/>
            <person name="Wang J."/>
            <person name="Xiong Z."/>
            <person name="Dong J."/>
            <person name="Xue Y."/>
            <person name="Zhu Y."/>
            <person name="Xu X."/>
            <person name="Sun L."/>
            <person name="Chen S."/>
            <person name="Nie H."/>
            <person name="Peng J."/>
            <person name="Xu J."/>
            <person name="Wang Y."/>
            <person name="Yuan Z."/>
            <person name="Wen Y."/>
            <person name="Yao Z."/>
            <person name="Shen Y."/>
            <person name="Qiang B."/>
            <person name="Hou Y."/>
            <person name="Yu J."/>
            <person name="Jin Q."/>
        </authorList>
    </citation>
    <scope>NUCLEOTIDE SEQUENCE [LARGE SCALE GENOMIC DNA]</scope>
    <source>
        <strain>Sd197</strain>
    </source>
</reference>
<organism>
    <name type="scientific">Shigella dysenteriae serotype 1 (strain Sd197)</name>
    <dbReference type="NCBI Taxonomy" id="300267"/>
    <lineage>
        <taxon>Bacteria</taxon>
        <taxon>Pseudomonadati</taxon>
        <taxon>Pseudomonadota</taxon>
        <taxon>Gammaproteobacteria</taxon>
        <taxon>Enterobacterales</taxon>
        <taxon>Enterobacteriaceae</taxon>
        <taxon>Shigella</taxon>
    </lineage>
</organism>
<proteinExistence type="inferred from homology"/>
<name>RL23_SHIDS</name>
<protein>
    <recommendedName>
        <fullName evidence="1">Large ribosomal subunit protein uL23</fullName>
    </recommendedName>
    <alternativeName>
        <fullName evidence="2">50S ribosomal protein L23</fullName>
    </alternativeName>
</protein>
<keyword id="KW-1185">Reference proteome</keyword>
<keyword id="KW-0687">Ribonucleoprotein</keyword>
<keyword id="KW-0689">Ribosomal protein</keyword>
<keyword id="KW-0694">RNA-binding</keyword>
<keyword id="KW-0699">rRNA-binding</keyword>
<dbReference type="EMBL" id="CP000034">
    <property type="protein sequence ID" value="ABB63472.1"/>
    <property type="molecule type" value="Genomic_DNA"/>
</dbReference>
<dbReference type="RefSeq" id="WP_000617536.1">
    <property type="nucleotide sequence ID" value="NC_007606.1"/>
</dbReference>
<dbReference type="RefSeq" id="YP_404963.1">
    <property type="nucleotide sequence ID" value="NC_007606.1"/>
</dbReference>
<dbReference type="SMR" id="Q32B33"/>
<dbReference type="STRING" id="300267.SDY_3494"/>
<dbReference type="EnsemblBacteria" id="ABB63472">
    <property type="protein sequence ID" value="ABB63472"/>
    <property type="gene ID" value="SDY_3494"/>
</dbReference>
<dbReference type="KEGG" id="sdy:SDY_3494"/>
<dbReference type="PATRIC" id="fig|300267.13.peg.4147"/>
<dbReference type="HOGENOM" id="CLU_037562_3_1_6"/>
<dbReference type="Proteomes" id="UP000002716">
    <property type="component" value="Chromosome"/>
</dbReference>
<dbReference type="GO" id="GO:1990904">
    <property type="term" value="C:ribonucleoprotein complex"/>
    <property type="evidence" value="ECO:0007669"/>
    <property type="project" value="UniProtKB-KW"/>
</dbReference>
<dbReference type="GO" id="GO:0005840">
    <property type="term" value="C:ribosome"/>
    <property type="evidence" value="ECO:0007669"/>
    <property type="project" value="UniProtKB-KW"/>
</dbReference>
<dbReference type="GO" id="GO:0019843">
    <property type="term" value="F:rRNA binding"/>
    <property type="evidence" value="ECO:0007669"/>
    <property type="project" value="UniProtKB-UniRule"/>
</dbReference>
<dbReference type="GO" id="GO:0003735">
    <property type="term" value="F:structural constituent of ribosome"/>
    <property type="evidence" value="ECO:0007669"/>
    <property type="project" value="InterPro"/>
</dbReference>
<dbReference type="GO" id="GO:0006412">
    <property type="term" value="P:translation"/>
    <property type="evidence" value="ECO:0007669"/>
    <property type="project" value="UniProtKB-UniRule"/>
</dbReference>
<dbReference type="FunFam" id="3.30.70.330:FF:000001">
    <property type="entry name" value="50S ribosomal protein L23"/>
    <property type="match status" value="1"/>
</dbReference>
<dbReference type="Gene3D" id="3.30.70.330">
    <property type="match status" value="1"/>
</dbReference>
<dbReference type="HAMAP" id="MF_01369_B">
    <property type="entry name" value="Ribosomal_uL23_B"/>
    <property type="match status" value="1"/>
</dbReference>
<dbReference type="InterPro" id="IPR012677">
    <property type="entry name" value="Nucleotide-bd_a/b_plait_sf"/>
</dbReference>
<dbReference type="InterPro" id="IPR013025">
    <property type="entry name" value="Ribosomal_uL23-like"/>
</dbReference>
<dbReference type="InterPro" id="IPR012678">
    <property type="entry name" value="Ribosomal_uL23/eL15/eS24_sf"/>
</dbReference>
<dbReference type="InterPro" id="IPR001014">
    <property type="entry name" value="Ribosomal_uL23_CS"/>
</dbReference>
<dbReference type="NCBIfam" id="NF004358">
    <property type="entry name" value="PRK05738.1-1"/>
    <property type="match status" value="1"/>
</dbReference>
<dbReference type="NCBIfam" id="NF004359">
    <property type="entry name" value="PRK05738.1-3"/>
    <property type="match status" value="1"/>
</dbReference>
<dbReference type="NCBIfam" id="NF004363">
    <property type="entry name" value="PRK05738.2-4"/>
    <property type="match status" value="1"/>
</dbReference>
<dbReference type="PANTHER" id="PTHR11620">
    <property type="entry name" value="60S RIBOSOMAL PROTEIN L23A"/>
    <property type="match status" value="1"/>
</dbReference>
<dbReference type="Pfam" id="PF00276">
    <property type="entry name" value="Ribosomal_L23"/>
    <property type="match status" value="1"/>
</dbReference>
<dbReference type="SUPFAM" id="SSF54189">
    <property type="entry name" value="Ribosomal proteins S24e, L23 and L15e"/>
    <property type="match status" value="1"/>
</dbReference>
<dbReference type="PROSITE" id="PS00050">
    <property type="entry name" value="RIBOSOMAL_L23"/>
    <property type="match status" value="1"/>
</dbReference>